<proteinExistence type="inferred from homology"/>
<sequence>MSQAQIDEIFALLDSAAKVLIDQGVLPADWQNNSQITRSKSPEHGDYASNIALTAAKAAKSNPRALAEQLTAALPANDSIAKLEIAGPGFINIFLNTDAKFAVLDAIFAKNQKYGLTDEFANKKIQVEFVSANPTSSLHVGHGRGAAFGMSVANLLEAVGYEVTREYYVNDAGRQMDILATSTYLRYLQLNGEQIHFPVGGYQGDYVTDIAQTIKTQQNDAYVHSYADISANAPEDEVSEVNDAGEKEVVSGDKNAHIDVIIANSKQALGDNYAVFLNAALSEILGDIKDDLNEFGVRFERWFSEKSIADEIEPVLAELDSKGHLYEKDGNIWFRSTDFGDEKDRVVRRANGLTTYFASDIAYHKNKFERGFDTVINVWGADHHGYIARVRAALTALGIDEKRLEVILVQFVALWRGEEKIQMSSRSGKFVTLRELREEVGNDAARFYYVARKPEVHIDFDLELAKSQSKDNAVYYIQYAHARVCSVLEKLAAKGFDVDDAQGSAQQHLLTADAESELIKLLAAYPATLKRAATGYDPHVLTNYLKDLASLFHAWYNDNRILPVSIIADETPSQEELDMMQARLRLSKAVRQVLANGLSLLGLSAPTSM</sequence>
<gene>
    <name evidence="1" type="primary">argS</name>
    <name type="ordered locus">PsycPRwf_0294</name>
</gene>
<dbReference type="EC" id="6.1.1.19" evidence="1"/>
<dbReference type="EMBL" id="CP000713">
    <property type="protein sequence ID" value="ABQ93249.1"/>
    <property type="molecule type" value="Genomic_DNA"/>
</dbReference>
<dbReference type="SMR" id="A5WC58"/>
<dbReference type="STRING" id="349106.PsycPRwf_0294"/>
<dbReference type="KEGG" id="prw:PsycPRwf_0294"/>
<dbReference type="eggNOG" id="COG0018">
    <property type="taxonomic scope" value="Bacteria"/>
</dbReference>
<dbReference type="HOGENOM" id="CLU_006406_0_1_6"/>
<dbReference type="GO" id="GO:0005737">
    <property type="term" value="C:cytoplasm"/>
    <property type="evidence" value="ECO:0007669"/>
    <property type="project" value="UniProtKB-SubCell"/>
</dbReference>
<dbReference type="GO" id="GO:0004814">
    <property type="term" value="F:arginine-tRNA ligase activity"/>
    <property type="evidence" value="ECO:0007669"/>
    <property type="project" value="UniProtKB-UniRule"/>
</dbReference>
<dbReference type="GO" id="GO:0005524">
    <property type="term" value="F:ATP binding"/>
    <property type="evidence" value="ECO:0007669"/>
    <property type="project" value="UniProtKB-UniRule"/>
</dbReference>
<dbReference type="GO" id="GO:0006420">
    <property type="term" value="P:arginyl-tRNA aminoacylation"/>
    <property type="evidence" value="ECO:0007669"/>
    <property type="project" value="UniProtKB-UniRule"/>
</dbReference>
<dbReference type="CDD" id="cd00671">
    <property type="entry name" value="ArgRS_core"/>
    <property type="match status" value="1"/>
</dbReference>
<dbReference type="FunFam" id="1.10.730.10:FF:000008">
    <property type="entry name" value="Arginine--tRNA ligase"/>
    <property type="match status" value="1"/>
</dbReference>
<dbReference type="Gene3D" id="3.30.1360.70">
    <property type="entry name" value="Arginyl tRNA synthetase N-terminal domain"/>
    <property type="match status" value="1"/>
</dbReference>
<dbReference type="Gene3D" id="3.40.50.620">
    <property type="entry name" value="HUPs"/>
    <property type="match status" value="1"/>
</dbReference>
<dbReference type="Gene3D" id="1.10.730.10">
    <property type="entry name" value="Isoleucyl-tRNA Synthetase, Domain 1"/>
    <property type="match status" value="1"/>
</dbReference>
<dbReference type="HAMAP" id="MF_00123">
    <property type="entry name" value="Arg_tRNA_synth"/>
    <property type="match status" value="1"/>
</dbReference>
<dbReference type="InterPro" id="IPR001278">
    <property type="entry name" value="Arg-tRNA-ligase"/>
</dbReference>
<dbReference type="InterPro" id="IPR005148">
    <property type="entry name" value="Arg-tRNA-synth_N"/>
</dbReference>
<dbReference type="InterPro" id="IPR036695">
    <property type="entry name" value="Arg-tRNA-synth_N_sf"/>
</dbReference>
<dbReference type="InterPro" id="IPR035684">
    <property type="entry name" value="ArgRS_core"/>
</dbReference>
<dbReference type="InterPro" id="IPR008909">
    <property type="entry name" value="DALR_anticod-bd"/>
</dbReference>
<dbReference type="InterPro" id="IPR014729">
    <property type="entry name" value="Rossmann-like_a/b/a_fold"/>
</dbReference>
<dbReference type="InterPro" id="IPR009080">
    <property type="entry name" value="tRNAsynth_Ia_anticodon-bd"/>
</dbReference>
<dbReference type="NCBIfam" id="TIGR00456">
    <property type="entry name" value="argS"/>
    <property type="match status" value="1"/>
</dbReference>
<dbReference type="PANTHER" id="PTHR11956:SF5">
    <property type="entry name" value="ARGININE--TRNA LIGASE, CYTOPLASMIC"/>
    <property type="match status" value="1"/>
</dbReference>
<dbReference type="PANTHER" id="PTHR11956">
    <property type="entry name" value="ARGINYL-TRNA SYNTHETASE"/>
    <property type="match status" value="1"/>
</dbReference>
<dbReference type="Pfam" id="PF03485">
    <property type="entry name" value="Arg_tRNA_synt_N"/>
    <property type="match status" value="1"/>
</dbReference>
<dbReference type="Pfam" id="PF05746">
    <property type="entry name" value="DALR_1"/>
    <property type="match status" value="1"/>
</dbReference>
<dbReference type="Pfam" id="PF00750">
    <property type="entry name" value="tRNA-synt_1d"/>
    <property type="match status" value="1"/>
</dbReference>
<dbReference type="PRINTS" id="PR01038">
    <property type="entry name" value="TRNASYNTHARG"/>
</dbReference>
<dbReference type="SMART" id="SM01016">
    <property type="entry name" value="Arg_tRNA_synt_N"/>
    <property type="match status" value="1"/>
</dbReference>
<dbReference type="SMART" id="SM00836">
    <property type="entry name" value="DALR_1"/>
    <property type="match status" value="1"/>
</dbReference>
<dbReference type="SUPFAM" id="SSF47323">
    <property type="entry name" value="Anticodon-binding domain of a subclass of class I aminoacyl-tRNA synthetases"/>
    <property type="match status" value="1"/>
</dbReference>
<dbReference type="SUPFAM" id="SSF55190">
    <property type="entry name" value="Arginyl-tRNA synthetase (ArgRS), N-terminal 'additional' domain"/>
    <property type="match status" value="1"/>
</dbReference>
<dbReference type="SUPFAM" id="SSF52374">
    <property type="entry name" value="Nucleotidylyl transferase"/>
    <property type="match status" value="1"/>
</dbReference>
<reference key="1">
    <citation type="submission" date="2007-05" db="EMBL/GenBank/DDBJ databases">
        <title>Complete sequence of chromosome of Psychrobacter sp. PRwf-1.</title>
        <authorList>
            <consortium name="US DOE Joint Genome Institute"/>
            <person name="Copeland A."/>
            <person name="Lucas S."/>
            <person name="Lapidus A."/>
            <person name="Barry K."/>
            <person name="Detter J.C."/>
            <person name="Glavina del Rio T."/>
            <person name="Hammon N."/>
            <person name="Israni S."/>
            <person name="Dalin E."/>
            <person name="Tice H."/>
            <person name="Pitluck S."/>
            <person name="Chain P."/>
            <person name="Malfatti S."/>
            <person name="Shin M."/>
            <person name="Vergez L."/>
            <person name="Schmutz J."/>
            <person name="Larimer F."/>
            <person name="Land M."/>
            <person name="Hauser L."/>
            <person name="Kyrpides N."/>
            <person name="Kim E."/>
            <person name="Tiedje J."/>
            <person name="Richardson P."/>
        </authorList>
    </citation>
    <scope>NUCLEOTIDE SEQUENCE [LARGE SCALE GENOMIC DNA]</scope>
    <source>
        <strain>PRwf-1</strain>
    </source>
</reference>
<keyword id="KW-0030">Aminoacyl-tRNA synthetase</keyword>
<keyword id="KW-0067">ATP-binding</keyword>
<keyword id="KW-0963">Cytoplasm</keyword>
<keyword id="KW-0436">Ligase</keyword>
<keyword id="KW-0547">Nucleotide-binding</keyword>
<keyword id="KW-0648">Protein biosynthesis</keyword>
<accession>A5WC58</accession>
<comment type="catalytic activity">
    <reaction evidence="1">
        <text>tRNA(Arg) + L-arginine + ATP = L-arginyl-tRNA(Arg) + AMP + diphosphate</text>
        <dbReference type="Rhea" id="RHEA:20301"/>
        <dbReference type="Rhea" id="RHEA-COMP:9658"/>
        <dbReference type="Rhea" id="RHEA-COMP:9673"/>
        <dbReference type="ChEBI" id="CHEBI:30616"/>
        <dbReference type="ChEBI" id="CHEBI:32682"/>
        <dbReference type="ChEBI" id="CHEBI:33019"/>
        <dbReference type="ChEBI" id="CHEBI:78442"/>
        <dbReference type="ChEBI" id="CHEBI:78513"/>
        <dbReference type="ChEBI" id="CHEBI:456215"/>
        <dbReference type="EC" id="6.1.1.19"/>
    </reaction>
</comment>
<comment type="subunit">
    <text evidence="1">Monomer.</text>
</comment>
<comment type="subcellular location">
    <subcellularLocation>
        <location evidence="1">Cytoplasm</location>
    </subcellularLocation>
</comment>
<comment type="similarity">
    <text evidence="1">Belongs to the class-I aminoacyl-tRNA synthetase family.</text>
</comment>
<name>SYR_PSYWF</name>
<evidence type="ECO:0000255" key="1">
    <source>
        <dbReference type="HAMAP-Rule" id="MF_00123"/>
    </source>
</evidence>
<feature type="chain" id="PRO_1000071396" description="Arginine--tRNA ligase">
    <location>
        <begin position="1"/>
        <end position="609"/>
    </location>
</feature>
<feature type="short sequence motif" description="'HIGH' region">
    <location>
        <begin position="132"/>
        <end position="142"/>
    </location>
</feature>
<organism>
    <name type="scientific">Psychrobacter sp. (strain PRwf-1)</name>
    <dbReference type="NCBI Taxonomy" id="349106"/>
    <lineage>
        <taxon>Bacteria</taxon>
        <taxon>Pseudomonadati</taxon>
        <taxon>Pseudomonadota</taxon>
        <taxon>Gammaproteobacteria</taxon>
        <taxon>Moraxellales</taxon>
        <taxon>Moraxellaceae</taxon>
        <taxon>Psychrobacter</taxon>
    </lineage>
</organism>
<protein>
    <recommendedName>
        <fullName evidence="1">Arginine--tRNA ligase</fullName>
        <ecNumber evidence="1">6.1.1.19</ecNumber>
    </recommendedName>
    <alternativeName>
        <fullName evidence="1">Arginyl-tRNA synthetase</fullName>
        <shortName evidence="1">ArgRS</shortName>
    </alternativeName>
</protein>